<reference key="1">
    <citation type="journal article" date="2009" name="BMC Genomics">
        <title>Pseudogene accumulation in the evolutionary histories of Salmonella enterica serovars Paratyphi A and Typhi.</title>
        <authorList>
            <person name="Holt K.E."/>
            <person name="Thomson N.R."/>
            <person name="Wain J."/>
            <person name="Langridge G.C."/>
            <person name="Hasan R."/>
            <person name="Bhutta Z.A."/>
            <person name="Quail M.A."/>
            <person name="Norbertczak H."/>
            <person name="Walker D."/>
            <person name="Simmonds M."/>
            <person name="White B."/>
            <person name="Bason N."/>
            <person name="Mungall K."/>
            <person name="Dougan G."/>
            <person name="Parkhill J."/>
        </authorList>
    </citation>
    <scope>NUCLEOTIDE SEQUENCE [LARGE SCALE GENOMIC DNA]</scope>
    <source>
        <strain>AKU_12601</strain>
    </source>
</reference>
<gene>
    <name evidence="1" type="primary">tusB</name>
    <name type="ordered locus">SSPA3094</name>
</gene>
<comment type="function">
    <text evidence="1">Part of a sulfur-relay system required for 2-thiolation of 5-methylaminomethyl-2-thiouridine (mnm(5)s(2)U) at tRNA wobble positions.</text>
</comment>
<comment type="subunit">
    <text evidence="1">Heterohexamer, formed by a dimer of trimers. The hexameric TusBCD complex contains 2 copies each of TusB, TusC and TusD. The TusBCD complex interacts with TusE.</text>
</comment>
<comment type="subcellular location">
    <subcellularLocation>
        <location evidence="1">Cytoplasm</location>
    </subcellularLocation>
</comment>
<comment type="similarity">
    <text evidence="1">Belongs to the DsrH/TusB family.</text>
</comment>
<feature type="chain" id="PRO_1000147192" description="Protein TusB">
    <location>
        <begin position="1"/>
        <end position="95"/>
    </location>
</feature>
<dbReference type="EMBL" id="FM200053">
    <property type="protein sequence ID" value="CAR61345.1"/>
    <property type="molecule type" value="Genomic_DNA"/>
</dbReference>
<dbReference type="RefSeq" id="WP_000903398.1">
    <property type="nucleotide sequence ID" value="NC_011147.1"/>
</dbReference>
<dbReference type="SMR" id="B5BGZ5"/>
<dbReference type="KEGG" id="sek:SSPA3094"/>
<dbReference type="HOGENOM" id="CLU_166087_2_1_6"/>
<dbReference type="Proteomes" id="UP000001869">
    <property type="component" value="Chromosome"/>
</dbReference>
<dbReference type="GO" id="GO:1990228">
    <property type="term" value="C:sulfurtransferase complex"/>
    <property type="evidence" value="ECO:0007669"/>
    <property type="project" value="TreeGrafter"/>
</dbReference>
<dbReference type="GO" id="GO:0002143">
    <property type="term" value="P:tRNA wobble position uridine thiolation"/>
    <property type="evidence" value="ECO:0007669"/>
    <property type="project" value="InterPro"/>
</dbReference>
<dbReference type="FunFam" id="3.40.1260.10:FF:000002">
    <property type="entry name" value="Sulfurtransferase TusB"/>
    <property type="match status" value="1"/>
</dbReference>
<dbReference type="Gene3D" id="3.40.1260.10">
    <property type="entry name" value="DsrEFH-like"/>
    <property type="match status" value="1"/>
</dbReference>
<dbReference type="HAMAP" id="MF_01564">
    <property type="entry name" value="Thiourid_synth_B"/>
    <property type="match status" value="1"/>
</dbReference>
<dbReference type="InterPro" id="IPR027396">
    <property type="entry name" value="DsrEFH-like"/>
</dbReference>
<dbReference type="InterPro" id="IPR023526">
    <property type="entry name" value="Sulphur_relay_TusB"/>
</dbReference>
<dbReference type="InterPro" id="IPR007215">
    <property type="entry name" value="Sulphur_relay_TusB/DsrH"/>
</dbReference>
<dbReference type="NCBIfam" id="NF010035">
    <property type="entry name" value="PRK13510.1"/>
    <property type="match status" value="1"/>
</dbReference>
<dbReference type="NCBIfam" id="TIGR03011">
    <property type="entry name" value="sulf_tusB_dsrH"/>
    <property type="match status" value="1"/>
</dbReference>
<dbReference type="PANTHER" id="PTHR37526">
    <property type="entry name" value="PROTEIN TUSB"/>
    <property type="match status" value="1"/>
</dbReference>
<dbReference type="PANTHER" id="PTHR37526:SF1">
    <property type="entry name" value="PROTEIN TUSB"/>
    <property type="match status" value="1"/>
</dbReference>
<dbReference type="Pfam" id="PF04077">
    <property type="entry name" value="DsrH"/>
    <property type="match status" value="1"/>
</dbReference>
<dbReference type="SUPFAM" id="SSF75169">
    <property type="entry name" value="DsrEFH-like"/>
    <property type="match status" value="1"/>
</dbReference>
<sequence>MLHTLPHCASGVDFPALLRLLKEGDALLLLQDGVTVAIEGNRFLESLRDAPITVYALKEDIDARGLGGQISDSVVRVDYTEFVRLTVKYANQMAW</sequence>
<organism>
    <name type="scientific">Salmonella paratyphi A (strain AKU_12601)</name>
    <dbReference type="NCBI Taxonomy" id="554290"/>
    <lineage>
        <taxon>Bacteria</taxon>
        <taxon>Pseudomonadati</taxon>
        <taxon>Pseudomonadota</taxon>
        <taxon>Gammaproteobacteria</taxon>
        <taxon>Enterobacterales</taxon>
        <taxon>Enterobacteriaceae</taxon>
        <taxon>Salmonella</taxon>
    </lineage>
</organism>
<protein>
    <recommendedName>
        <fullName evidence="1">Protein TusB</fullName>
    </recommendedName>
    <alternativeName>
        <fullName evidence="1">tRNA 2-thiouridine synthesizing protein B</fullName>
    </alternativeName>
</protein>
<accession>B5BGZ5</accession>
<keyword id="KW-0963">Cytoplasm</keyword>
<keyword id="KW-0819">tRNA processing</keyword>
<evidence type="ECO:0000255" key="1">
    <source>
        <dbReference type="HAMAP-Rule" id="MF_01564"/>
    </source>
</evidence>
<name>TUSB_SALPK</name>
<proteinExistence type="inferred from homology"/>